<name>NADK_PSE14</name>
<protein>
    <recommendedName>
        <fullName evidence="1">NAD kinase</fullName>
        <ecNumber evidence="1">2.7.1.23</ecNumber>
    </recommendedName>
    <alternativeName>
        <fullName evidence="1">ATP-dependent NAD kinase</fullName>
    </alternativeName>
</protein>
<evidence type="ECO:0000255" key="1">
    <source>
        <dbReference type="HAMAP-Rule" id="MF_00361"/>
    </source>
</evidence>
<dbReference type="EC" id="2.7.1.23" evidence="1"/>
<dbReference type="EMBL" id="CP000058">
    <property type="protein sequence ID" value="AAZ33148.1"/>
    <property type="molecule type" value="Genomic_DNA"/>
</dbReference>
<dbReference type="RefSeq" id="WP_002554505.1">
    <property type="nucleotide sequence ID" value="NC_005773.3"/>
</dbReference>
<dbReference type="SMR" id="Q48FT7"/>
<dbReference type="KEGG" id="psp:PSPPH_3600"/>
<dbReference type="eggNOG" id="COG0061">
    <property type="taxonomic scope" value="Bacteria"/>
</dbReference>
<dbReference type="HOGENOM" id="CLU_008831_0_1_6"/>
<dbReference type="Proteomes" id="UP000000551">
    <property type="component" value="Chromosome"/>
</dbReference>
<dbReference type="GO" id="GO:0005737">
    <property type="term" value="C:cytoplasm"/>
    <property type="evidence" value="ECO:0007669"/>
    <property type="project" value="UniProtKB-SubCell"/>
</dbReference>
<dbReference type="GO" id="GO:0005524">
    <property type="term" value="F:ATP binding"/>
    <property type="evidence" value="ECO:0007669"/>
    <property type="project" value="UniProtKB-KW"/>
</dbReference>
<dbReference type="GO" id="GO:0046872">
    <property type="term" value="F:metal ion binding"/>
    <property type="evidence" value="ECO:0007669"/>
    <property type="project" value="UniProtKB-UniRule"/>
</dbReference>
<dbReference type="GO" id="GO:0051287">
    <property type="term" value="F:NAD binding"/>
    <property type="evidence" value="ECO:0007669"/>
    <property type="project" value="UniProtKB-ARBA"/>
</dbReference>
<dbReference type="GO" id="GO:0003951">
    <property type="term" value="F:NAD+ kinase activity"/>
    <property type="evidence" value="ECO:0007669"/>
    <property type="project" value="UniProtKB-UniRule"/>
</dbReference>
<dbReference type="GO" id="GO:0019674">
    <property type="term" value="P:NAD metabolic process"/>
    <property type="evidence" value="ECO:0007669"/>
    <property type="project" value="InterPro"/>
</dbReference>
<dbReference type="GO" id="GO:0006741">
    <property type="term" value="P:NADP biosynthetic process"/>
    <property type="evidence" value="ECO:0007669"/>
    <property type="project" value="UniProtKB-UniRule"/>
</dbReference>
<dbReference type="FunFam" id="2.60.200.30:FF:000001">
    <property type="entry name" value="NAD kinase"/>
    <property type="match status" value="1"/>
</dbReference>
<dbReference type="Gene3D" id="3.40.50.10330">
    <property type="entry name" value="Probable inorganic polyphosphate/atp-NAD kinase, domain 1"/>
    <property type="match status" value="1"/>
</dbReference>
<dbReference type="Gene3D" id="2.60.200.30">
    <property type="entry name" value="Probable inorganic polyphosphate/atp-NAD kinase, domain 2"/>
    <property type="match status" value="1"/>
</dbReference>
<dbReference type="HAMAP" id="MF_00361">
    <property type="entry name" value="NAD_kinase"/>
    <property type="match status" value="1"/>
</dbReference>
<dbReference type="InterPro" id="IPR017438">
    <property type="entry name" value="ATP-NAD_kinase_N"/>
</dbReference>
<dbReference type="InterPro" id="IPR017437">
    <property type="entry name" value="ATP-NAD_kinase_PpnK-typ_C"/>
</dbReference>
<dbReference type="InterPro" id="IPR016064">
    <property type="entry name" value="NAD/diacylglycerol_kinase_sf"/>
</dbReference>
<dbReference type="InterPro" id="IPR002504">
    <property type="entry name" value="NADK"/>
</dbReference>
<dbReference type="NCBIfam" id="NF002306">
    <property type="entry name" value="PRK01231.1"/>
    <property type="match status" value="1"/>
</dbReference>
<dbReference type="PANTHER" id="PTHR20275">
    <property type="entry name" value="NAD KINASE"/>
    <property type="match status" value="1"/>
</dbReference>
<dbReference type="PANTHER" id="PTHR20275:SF0">
    <property type="entry name" value="NAD KINASE"/>
    <property type="match status" value="1"/>
</dbReference>
<dbReference type="Pfam" id="PF01513">
    <property type="entry name" value="NAD_kinase"/>
    <property type="match status" value="1"/>
</dbReference>
<dbReference type="Pfam" id="PF20143">
    <property type="entry name" value="NAD_kinase_C"/>
    <property type="match status" value="1"/>
</dbReference>
<dbReference type="SUPFAM" id="SSF111331">
    <property type="entry name" value="NAD kinase/diacylglycerol kinase-like"/>
    <property type="match status" value="1"/>
</dbReference>
<gene>
    <name evidence="1" type="primary">nadK</name>
    <name type="ordered locus">PSPPH_3600</name>
</gene>
<sequence>MEQFRNIGIIGRLGSVQVLDTVRRLKRFLLDRHLHVILEETIAEVLPGHGLQTSSRKMLGEVCDMVIVVGGDGSLLGAARALARHNVPVLGINRGSLGFLTDIRPDELEVKCAEVLDGHYLVENRFLLQAEVRRHGEAIGQGDALNDVVLHPGKSTRMIEFEIYIDGQFVCSQKADGLIVATPTGSTAYALSAGGPIMHPKLDAIVIVPMYPHTLSGRPIVVDGNSELKIVVSKDMTIYPQVSCDGQNHFTCAPGDTITVSKKPQKLRLIHPLDHNYYEVCRTKLGWGSKLGGGGD</sequence>
<organism>
    <name type="scientific">Pseudomonas savastanoi pv. phaseolicola (strain 1448A / Race 6)</name>
    <name type="common">Pseudomonas syringae pv. phaseolicola (strain 1448A / Race 6)</name>
    <dbReference type="NCBI Taxonomy" id="264730"/>
    <lineage>
        <taxon>Bacteria</taxon>
        <taxon>Pseudomonadati</taxon>
        <taxon>Pseudomonadota</taxon>
        <taxon>Gammaproteobacteria</taxon>
        <taxon>Pseudomonadales</taxon>
        <taxon>Pseudomonadaceae</taxon>
        <taxon>Pseudomonas</taxon>
    </lineage>
</organism>
<proteinExistence type="inferred from homology"/>
<accession>Q48FT7</accession>
<feature type="chain" id="PRO_0000229680" description="NAD kinase">
    <location>
        <begin position="1"/>
        <end position="296"/>
    </location>
</feature>
<feature type="active site" description="Proton acceptor" evidence="1">
    <location>
        <position position="72"/>
    </location>
</feature>
<feature type="binding site" evidence="1">
    <location>
        <begin position="72"/>
        <end position="73"/>
    </location>
    <ligand>
        <name>NAD(+)</name>
        <dbReference type="ChEBI" id="CHEBI:57540"/>
    </ligand>
</feature>
<feature type="binding site" evidence="1">
    <location>
        <begin position="146"/>
        <end position="147"/>
    </location>
    <ligand>
        <name>NAD(+)</name>
        <dbReference type="ChEBI" id="CHEBI:57540"/>
    </ligand>
</feature>
<feature type="binding site" evidence="1">
    <location>
        <position position="157"/>
    </location>
    <ligand>
        <name>NAD(+)</name>
        <dbReference type="ChEBI" id="CHEBI:57540"/>
    </ligand>
</feature>
<feature type="binding site" evidence="1">
    <location>
        <position position="174"/>
    </location>
    <ligand>
        <name>NAD(+)</name>
        <dbReference type="ChEBI" id="CHEBI:57540"/>
    </ligand>
</feature>
<feature type="binding site" evidence="1">
    <location>
        <position position="176"/>
    </location>
    <ligand>
        <name>NAD(+)</name>
        <dbReference type="ChEBI" id="CHEBI:57540"/>
    </ligand>
</feature>
<feature type="binding site" evidence="1">
    <location>
        <begin position="187"/>
        <end position="192"/>
    </location>
    <ligand>
        <name>NAD(+)</name>
        <dbReference type="ChEBI" id="CHEBI:57540"/>
    </ligand>
</feature>
<feature type="binding site" evidence="1">
    <location>
        <position position="247"/>
    </location>
    <ligand>
        <name>NAD(+)</name>
        <dbReference type="ChEBI" id="CHEBI:57540"/>
    </ligand>
</feature>
<keyword id="KW-0067">ATP-binding</keyword>
<keyword id="KW-0963">Cytoplasm</keyword>
<keyword id="KW-0418">Kinase</keyword>
<keyword id="KW-0520">NAD</keyword>
<keyword id="KW-0521">NADP</keyword>
<keyword id="KW-0547">Nucleotide-binding</keyword>
<keyword id="KW-0808">Transferase</keyword>
<reference key="1">
    <citation type="journal article" date="2005" name="J. Bacteriol.">
        <title>Whole-genome sequence analysis of Pseudomonas syringae pv. phaseolicola 1448A reveals divergence among pathovars in genes involved in virulence and transposition.</title>
        <authorList>
            <person name="Joardar V."/>
            <person name="Lindeberg M."/>
            <person name="Jackson R.W."/>
            <person name="Selengut J."/>
            <person name="Dodson R."/>
            <person name="Brinkac L.M."/>
            <person name="Daugherty S.C."/>
            <person name="DeBoy R.T."/>
            <person name="Durkin A.S."/>
            <person name="Gwinn Giglio M."/>
            <person name="Madupu R."/>
            <person name="Nelson W.C."/>
            <person name="Rosovitz M.J."/>
            <person name="Sullivan S.A."/>
            <person name="Crabtree J."/>
            <person name="Creasy T."/>
            <person name="Davidsen T.M."/>
            <person name="Haft D.H."/>
            <person name="Zafar N."/>
            <person name="Zhou L."/>
            <person name="Halpin R."/>
            <person name="Holley T."/>
            <person name="Khouri H.M."/>
            <person name="Feldblyum T.V."/>
            <person name="White O."/>
            <person name="Fraser C.M."/>
            <person name="Chatterjee A.K."/>
            <person name="Cartinhour S."/>
            <person name="Schneider D."/>
            <person name="Mansfield J.W."/>
            <person name="Collmer A."/>
            <person name="Buell R."/>
        </authorList>
    </citation>
    <scope>NUCLEOTIDE SEQUENCE [LARGE SCALE GENOMIC DNA]</scope>
    <source>
        <strain>1448A / Race 6</strain>
    </source>
</reference>
<comment type="function">
    <text evidence="1">Involved in the regulation of the intracellular balance of NAD and NADP, and is a key enzyme in the biosynthesis of NADP. Catalyzes specifically the phosphorylation on 2'-hydroxyl of the adenosine moiety of NAD to yield NADP.</text>
</comment>
<comment type="catalytic activity">
    <reaction evidence="1">
        <text>NAD(+) + ATP = ADP + NADP(+) + H(+)</text>
        <dbReference type="Rhea" id="RHEA:18629"/>
        <dbReference type="ChEBI" id="CHEBI:15378"/>
        <dbReference type="ChEBI" id="CHEBI:30616"/>
        <dbReference type="ChEBI" id="CHEBI:57540"/>
        <dbReference type="ChEBI" id="CHEBI:58349"/>
        <dbReference type="ChEBI" id="CHEBI:456216"/>
        <dbReference type="EC" id="2.7.1.23"/>
    </reaction>
</comment>
<comment type="cofactor">
    <cofactor evidence="1">
        <name>a divalent metal cation</name>
        <dbReference type="ChEBI" id="CHEBI:60240"/>
    </cofactor>
</comment>
<comment type="subcellular location">
    <subcellularLocation>
        <location evidence="1">Cytoplasm</location>
    </subcellularLocation>
</comment>
<comment type="similarity">
    <text evidence="1">Belongs to the NAD kinase family.</text>
</comment>